<keyword id="KW-0131">Cell cycle</keyword>
<keyword id="KW-0132">Cell division</keyword>
<keyword id="KW-0963">Cytoplasm</keyword>
<keyword id="KW-0206">Cytoskeleton</keyword>
<keyword id="KW-0493">Microtubule</keyword>
<keyword id="KW-0498">Mitosis</keyword>
<keyword id="KW-0597">Phosphoprotein</keyword>
<keyword id="KW-1185">Reference proteome</keyword>
<name>ALP6_SCHPO</name>
<gene>
    <name type="primary">alp6</name>
    <name type="ORF">SPBC428.20c</name>
    <name type="ORF">SPBC902.01c</name>
</gene>
<comment type="function">
    <text evidence="1">Component of the gamma tubule complex that is required for the regulation of both interphase microtubules and mitotic bipolar spindles.</text>
</comment>
<comment type="subunit">
    <text evidence="1 3 4">Part of the gamma-tubulin complex (PubMed:11080156). Interacts directly with mzt1 (PubMed:24006493). Interacts with mto1 (PubMed:19001497). Interacts with mto2 (PubMed:19001497).</text>
</comment>
<comment type="interaction">
    <interactant intactId="EBI-9549762">
        <id>Q9USQ2</id>
    </interactant>
    <interactant intactId="EBI-1562228">
        <id>Q9Y705</id>
        <label>alp4</label>
    </interactant>
    <organismsDiffer>false</organismsDiffer>
    <experiments>3</experiments>
</comment>
<comment type="interaction">
    <interactant intactId="EBI-9549762">
        <id>Q9USQ2</id>
    </interactant>
    <interactant intactId="EBI-9549556">
        <id>P0CF96</id>
        <label>mzt1</label>
    </interactant>
    <organismsDiffer>false</organismsDiffer>
    <experiments>6</experiments>
</comment>
<comment type="subcellular location">
    <subcellularLocation>
        <location evidence="1">Cytoplasm</location>
        <location evidence="1">Cytoskeleton</location>
        <location evidence="1">Microtubule organizing center</location>
        <location evidence="1">Spindle pole body</location>
    </subcellularLocation>
    <text>Localizes to the SPB and also to the equatorial MTOC.</text>
</comment>
<comment type="similarity">
    <text evidence="5">Belongs to the TUBGCP family.</text>
</comment>
<comment type="sequence caution" evidence="5">
    <conflict type="frameshift">
        <sequence resource="EMBL-CDS" id="BAA94097"/>
    </conflict>
</comment>
<organism>
    <name type="scientific">Schizosaccharomyces pombe (strain 972 / ATCC 24843)</name>
    <name type="common">Fission yeast</name>
    <dbReference type="NCBI Taxonomy" id="284812"/>
    <lineage>
        <taxon>Eukaryota</taxon>
        <taxon>Fungi</taxon>
        <taxon>Dikarya</taxon>
        <taxon>Ascomycota</taxon>
        <taxon>Taphrinomycotina</taxon>
        <taxon>Schizosaccharomycetes</taxon>
        <taxon>Schizosaccharomycetales</taxon>
        <taxon>Schizosaccharomycetaceae</taxon>
        <taxon>Schizosaccharomyces</taxon>
    </lineage>
</organism>
<evidence type="ECO:0000269" key="1">
    <source>
    </source>
</evidence>
<evidence type="ECO:0000269" key="2">
    <source>
    </source>
</evidence>
<evidence type="ECO:0000269" key="3">
    <source>
    </source>
</evidence>
<evidence type="ECO:0000269" key="4">
    <source>
    </source>
</evidence>
<evidence type="ECO:0000305" key="5"/>
<reference key="1">
    <citation type="journal article" date="2000" name="EMBO J.">
        <title>The fission yeast gamma-tubulin complex is required in G(1) phase and is a component of the spindle assembly checkpoint.</title>
        <authorList>
            <person name="Vardy L."/>
            <person name="Toda T."/>
        </authorList>
    </citation>
    <scope>NUCLEOTIDE SEQUENCE [GENOMIC DNA]</scope>
    <scope>FUNCTION</scope>
    <scope>SUBUNIT</scope>
    <scope>SUBCELLULAR LOCATION</scope>
</reference>
<reference key="2">
    <citation type="journal article" date="2002" name="Nature">
        <title>The genome sequence of Schizosaccharomyces pombe.</title>
        <authorList>
            <person name="Wood V."/>
            <person name="Gwilliam R."/>
            <person name="Rajandream M.A."/>
            <person name="Lyne M.H."/>
            <person name="Lyne R."/>
            <person name="Stewart A."/>
            <person name="Sgouros J.G."/>
            <person name="Peat N."/>
            <person name="Hayles J."/>
            <person name="Baker S.G."/>
            <person name="Basham D."/>
            <person name="Bowman S."/>
            <person name="Brooks K."/>
            <person name="Brown D."/>
            <person name="Brown S."/>
            <person name="Chillingworth T."/>
            <person name="Churcher C.M."/>
            <person name="Collins M."/>
            <person name="Connor R."/>
            <person name="Cronin A."/>
            <person name="Davis P."/>
            <person name="Feltwell T."/>
            <person name="Fraser A."/>
            <person name="Gentles S."/>
            <person name="Goble A."/>
            <person name="Hamlin N."/>
            <person name="Harris D.E."/>
            <person name="Hidalgo J."/>
            <person name="Hodgson G."/>
            <person name="Holroyd S."/>
            <person name="Hornsby T."/>
            <person name="Howarth S."/>
            <person name="Huckle E.J."/>
            <person name="Hunt S."/>
            <person name="Jagels K."/>
            <person name="James K.D."/>
            <person name="Jones L."/>
            <person name="Jones M."/>
            <person name="Leather S."/>
            <person name="McDonald S."/>
            <person name="McLean J."/>
            <person name="Mooney P."/>
            <person name="Moule S."/>
            <person name="Mungall K.L."/>
            <person name="Murphy L.D."/>
            <person name="Niblett D."/>
            <person name="Odell C."/>
            <person name="Oliver K."/>
            <person name="O'Neil S."/>
            <person name="Pearson D."/>
            <person name="Quail M.A."/>
            <person name="Rabbinowitsch E."/>
            <person name="Rutherford K.M."/>
            <person name="Rutter S."/>
            <person name="Saunders D."/>
            <person name="Seeger K."/>
            <person name="Sharp S."/>
            <person name="Skelton J."/>
            <person name="Simmonds M.N."/>
            <person name="Squares R."/>
            <person name="Squares S."/>
            <person name="Stevens K."/>
            <person name="Taylor K."/>
            <person name="Taylor R.G."/>
            <person name="Tivey A."/>
            <person name="Walsh S.V."/>
            <person name="Warren T."/>
            <person name="Whitehead S."/>
            <person name="Woodward J.R."/>
            <person name="Volckaert G."/>
            <person name="Aert R."/>
            <person name="Robben J."/>
            <person name="Grymonprez B."/>
            <person name="Weltjens I."/>
            <person name="Vanstreels E."/>
            <person name="Rieger M."/>
            <person name="Schaefer M."/>
            <person name="Mueller-Auer S."/>
            <person name="Gabel C."/>
            <person name="Fuchs M."/>
            <person name="Duesterhoeft A."/>
            <person name="Fritzc C."/>
            <person name="Holzer E."/>
            <person name="Moestl D."/>
            <person name="Hilbert H."/>
            <person name="Borzym K."/>
            <person name="Langer I."/>
            <person name="Beck A."/>
            <person name="Lehrach H."/>
            <person name="Reinhardt R."/>
            <person name="Pohl T.M."/>
            <person name="Eger P."/>
            <person name="Zimmermann W."/>
            <person name="Wedler H."/>
            <person name="Wambutt R."/>
            <person name="Purnelle B."/>
            <person name="Goffeau A."/>
            <person name="Cadieu E."/>
            <person name="Dreano S."/>
            <person name="Gloux S."/>
            <person name="Lelaure V."/>
            <person name="Mottier S."/>
            <person name="Galibert F."/>
            <person name="Aves S.J."/>
            <person name="Xiang Z."/>
            <person name="Hunt C."/>
            <person name="Moore K."/>
            <person name="Hurst S.M."/>
            <person name="Lucas M."/>
            <person name="Rochet M."/>
            <person name="Gaillardin C."/>
            <person name="Tallada V.A."/>
            <person name="Garzon A."/>
            <person name="Thode G."/>
            <person name="Daga R.R."/>
            <person name="Cruzado L."/>
            <person name="Jimenez J."/>
            <person name="Sanchez M."/>
            <person name="del Rey F."/>
            <person name="Benito J."/>
            <person name="Dominguez A."/>
            <person name="Revuelta J.L."/>
            <person name="Moreno S."/>
            <person name="Armstrong J."/>
            <person name="Forsburg S.L."/>
            <person name="Cerutti L."/>
            <person name="Lowe T."/>
            <person name="McCombie W.R."/>
            <person name="Paulsen I."/>
            <person name="Potashkin J."/>
            <person name="Shpakovski G.V."/>
            <person name="Ussery D."/>
            <person name="Barrell B.G."/>
            <person name="Nurse P."/>
        </authorList>
    </citation>
    <scope>NUCLEOTIDE SEQUENCE [LARGE SCALE GENOMIC DNA]</scope>
    <source>
        <strain>972 / ATCC 24843</strain>
    </source>
</reference>
<reference key="3">
    <citation type="journal article" date="2011" name="Science">
        <title>Comparative functional genomics of the fission yeasts.</title>
        <authorList>
            <person name="Rhind N."/>
            <person name="Chen Z."/>
            <person name="Yassour M."/>
            <person name="Thompson D.A."/>
            <person name="Haas B.J."/>
            <person name="Habib N."/>
            <person name="Wapinski I."/>
            <person name="Roy S."/>
            <person name="Lin M.F."/>
            <person name="Heiman D.I."/>
            <person name="Young S.K."/>
            <person name="Furuya K."/>
            <person name="Guo Y."/>
            <person name="Pidoux A."/>
            <person name="Chen H.M."/>
            <person name="Robbertse B."/>
            <person name="Goldberg J.M."/>
            <person name="Aoki K."/>
            <person name="Bayne E.H."/>
            <person name="Berlin A.M."/>
            <person name="Desjardins C.A."/>
            <person name="Dobbs E."/>
            <person name="Dukaj L."/>
            <person name="Fan L."/>
            <person name="FitzGerald M.G."/>
            <person name="French C."/>
            <person name="Gujja S."/>
            <person name="Hansen K."/>
            <person name="Keifenheim D."/>
            <person name="Levin J.Z."/>
            <person name="Mosher R.A."/>
            <person name="Mueller C.A."/>
            <person name="Pfiffner J."/>
            <person name="Priest M."/>
            <person name="Russ C."/>
            <person name="Smialowska A."/>
            <person name="Swoboda P."/>
            <person name="Sykes S.M."/>
            <person name="Vaughn M."/>
            <person name="Vengrova S."/>
            <person name="Yoder R."/>
            <person name="Zeng Q."/>
            <person name="Allshire R."/>
            <person name="Baulcombe D."/>
            <person name="Birren B.W."/>
            <person name="Brown W."/>
            <person name="Ekwall K."/>
            <person name="Kellis M."/>
            <person name="Leatherwood J."/>
            <person name="Levin H."/>
            <person name="Margalit H."/>
            <person name="Martienssen R."/>
            <person name="Nieduszynski C.A."/>
            <person name="Spatafora J.W."/>
            <person name="Friedman N."/>
            <person name="Dalgaard J.Z."/>
            <person name="Baumann P."/>
            <person name="Niki H."/>
            <person name="Regev A."/>
            <person name="Nusbaum C."/>
        </authorList>
    </citation>
    <scope>REVISION OF GENE MODEL</scope>
</reference>
<reference key="4">
    <citation type="journal article" date="2008" name="J. Cell Sci.">
        <title>Two distinct regions of Mto1 are required for normal microtubule nucleation and efficient association with the gamma-tubulin complex in vivo.</title>
        <authorList>
            <person name="Samejima I."/>
            <person name="Miller V.J."/>
            <person name="Groocock L.M."/>
            <person name="Sawin K.E."/>
        </authorList>
    </citation>
    <scope>INTERACTION WITH MTO1 AND MTO2</scope>
</reference>
<reference key="5">
    <citation type="journal article" date="2008" name="J. Proteome Res.">
        <title>Phosphoproteome analysis of fission yeast.</title>
        <authorList>
            <person name="Wilson-Grady J.T."/>
            <person name="Villen J."/>
            <person name="Gygi S.P."/>
        </authorList>
    </citation>
    <scope>PHOSPHORYLATION [LARGE SCALE ANALYSIS] AT THR-286</scope>
    <scope>IDENTIFICATION BY MASS SPECTROMETRY</scope>
</reference>
<reference key="6">
    <citation type="journal article" date="2013" name="Mol. Biol. Cell">
        <title>Mzt1/Tam4, a fission yeast MOZART1 homologue, is an essential component of the gamma-tubulin complex and directly interacts with GCP3(Alp6).</title>
        <authorList>
            <person name="Dhani D.K."/>
            <person name="Goult B.T."/>
            <person name="George G.M."/>
            <person name="Rogerson D.T."/>
            <person name="Bitton D.A."/>
            <person name="Miller C.J."/>
            <person name="Schwabe J.W."/>
            <person name="Tanaka K."/>
        </authorList>
    </citation>
    <scope>INTERACTION WITH MZT1</scope>
</reference>
<sequence>MSEIHVKTALSRLADKYLQNSKNPSVPYTIETIVSFFQEIIHSISPDTFQLDIDDILYKIYSKIPPEENNDALFSKLSNLVSRLKSQTVIHNKSQILYFLYLLSPISQSSRDVSSHLLDESISNPINIPSTEVESSNFGQTRYDQVPENPQITDWDEGLENESSISIAHDSSRLNRSTETSSVQHTLITEADLLSSISYVLQGISTEYVQFKNELALLSKRIPVQYLLQMRALSETGLLYQELKVFSNYDPSVSQSIDGDNVSKAFINDQSLALQSLKSVISKELTNFLALIASLDSQIRADASLEKPMVTIRRCIAWTQVAKLKLRILSSVVNDNMNQENKKRLIQVVSKYNVHGDPLIQELSDKILTEITGPLYEMIENWIYKGELVDPYQEFFVKEKNGSESHDHQGQGDVVWKGKYFLDKELIPSFLSEELVDKIFLIGKSLNFARYGCGDFDWAQEHYQKLVKKLSYRDPHSLETVVDKAYTESINHLVYLMEEVFHLTDHLKAIKKYLLLGQGDFVDLLMESLGNSLDQPANTLFRHNLTASLESAIRSSNASYEPEYVLKRLDARLLELSHGETGWDVFTLEYKVDSPINVIITPYCSRQYLKIFNFLWRLKRIEFALAHSWRRVNLGERNVFRNLDYTKFEWHFVSCHLAEMIHFVCQLQYYILFEVIEISWQELQLAMEKPNATLDTYIEAHEKYVTSITHKGLLGGGKSRNEDSFLHQLHDILKVILNFHDAIELLYNFSCSLSNRIRINVPISTDALAAQYTPIKNELSNFTEEFQVRLQKLLHGLASHKDPEMRFLSVRLNYNEFYVSHRRRHDKDVTSQ</sequence>
<proteinExistence type="evidence at protein level"/>
<protein>
    <recommendedName>
        <fullName>Spindle pole body component alp6</fullName>
    </recommendedName>
    <alternativeName>
        <fullName>Altered polarity protein 6</fullName>
    </alternativeName>
</protein>
<dbReference type="EMBL" id="AB040811">
    <property type="protein sequence ID" value="BAA94097.1"/>
    <property type="status" value="ALT_FRAME"/>
    <property type="molecule type" value="Genomic_DNA"/>
</dbReference>
<dbReference type="EMBL" id="CU329671">
    <property type="protein sequence ID" value="CAA22295.3"/>
    <property type="molecule type" value="Genomic_DNA"/>
</dbReference>
<dbReference type="PIR" id="T50382">
    <property type="entry name" value="T50382"/>
</dbReference>
<dbReference type="RefSeq" id="XP_001713121.2">
    <property type="nucleotide sequence ID" value="XM_001713069.2"/>
</dbReference>
<dbReference type="SMR" id="Q9USQ2"/>
<dbReference type="BioGRID" id="277215">
    <property type="interactions" value="16"/>
</dbReference>
<dbReference type="FunCoup" id="Q9USQ2">
    <property type="interactions" value="713"/>
</dbReference>
<dbReference type="IntAct" id="Q9USQ2">
    <property type="interactions" value="3"/>
</dbReference>
<dbReference type="STRING" id="284812.Q9USQ2"/>
<dbReference type="iPTMnet" id="Q9USQ2"/>
<dbReference type="PaxDb" id="4896-SPBC428.20c.1"/>
<dbReference type="EnsemblFungi" id="SPBC428.20c.1">
    <property type="protein sequence ID" value="SPBC428.20c.1:pep"/>
    <property type="gene ID" value="SPBC428.20c"/>
</dbReference>
<dbReference type="PomBase" id="SPBC428.20c">
    <property type="gene designation" value="alp6"/>
</dbReference>
<dbReference type="VEuPathDB" id="FungiDB:SPBC428.20c"/>
<dbReference type="eggNOG" id="KOG2000">
    <property type="taxonomic scope" value="Eukaryota"/>
</dbReference>
<dbReference type="HOGENOM" id="CLU_003736_0_0_1"/>
<dbReference type="InParanoid" id="Q9USQ2"/>
<dbReference type="OMA" id="MRMMSVC"/>
<dbReference type="PhylomeDB" id="Q9USQ2"/>
<dbReference type="CD-CODE" id="576F0A76">
    <property type="entry name" value="Centrosome"/>
</dbReference>
<dbReference type="PRO" id="PR:Q9USQ2"/>
<dbReference type="Proteomes" id="UP000002485">
    <property type="component" value="Chromosome II"/>
</dbReference>
<dbReference type="GO" id="GO:0032153">
    <property type="term" value="C:cell division site"/>
    <property type="evidence" value="ECO:0007005"/>
    <property type="project" value="PomBase"/>
</dbReference>
<dbReference type="GO" id="GO:0005829">
    <property type="term" value="C:cytosol"/>
    <property type="evidence" value="ECO:0007005"/>
    <property type="project" value="PomBase"/>
</dbReference>
<dbReference type="GO" id="GO:0000923">
    <property type="term" value="C:equatorial microtubule organizing center"/>
    <property type="evidence" value="ECO:0000314"/>
    <property type="project" value="PomBase"/>
</dbReference>
<dbReference type="GO" id="GO:0000930">
    <property type="term" value="C:gamma-tubulin complex"/>
    <property type="evidence" value="ECO:0000318"/>
    <property type="project" value="GO_Central"/>
</dbReference>
<dbReference type="GO" id="GO:0000931">
    <property type="term" value="C:gamma-tubulin ring complex"/>
    <property type="evidence" value="ECO:0000314"/>
    <property type="project" value="PomBase"/>
</dbReference>
<dbReference type="GO" id="GO:0008275">
    <property type="term" value="C:gamma-tubulin small complex"/>
    <property type="evidence" value="ECO:0000314"/>
    <property type="project" value="PomBase"/>
</dbReference>
<dbReference type="GO" id="GO:0061496">
    <property type="term" value="C:half bridge of mitotic spindle pole body"/>
    <property type="evidence" value="ECO:0000314"/>
    <property type="project" value="PomBase"/>
</dbReference>
<dbReference type="GO" id="GO:0061497">
    <property type="term" value="C:inner plaque of mitotic spindle pole body"/>
    <property type="evidence" value="ECO:0000314"/>
    <property type="project" value="PomBase"/>
</dbReference>
<dbReference type="GO" id="GO:0005874">
    <property type="term" value="C:microtubule"/>
    <property type="evidence" value="ECO:0007669"/>
    <property type="project" value="UniProtKB-KW"/>
</dbReference>
<dbReference type="GO" id="GO:0044732">
    <property type="term" value="C:mitotic spindle pole body"/>
    <property type="evidence" value="ECO:0000314"/>
    <property type="project" value="PomBase"/>
</dbReference>
<dbReference type="GO" id="GO:0005634">
    <property type="term" value="C:nucleus"/>
    <property type="evidence" value="ECO:0007005"/>
    <property type="project" value="PomBase"/>
</dbReference>
<dbReference type="GO" id="GO:0071957">
    <property type="term" value="C:old mitotic spindle pole body"/>
    <property type="evidence" value="ECO:0000314"/>
    <property type="project" value="PomBase"/>
</dbReference>
<dbReference type="GO" id="GO:0000922">
    <property type="term" value="C:spindle pole"/>
    <property type="evidence" value="ECO:0007669"/>
    <property type="project" value="InterPro"/>
</dbReference>
<dbReference type="GO" id="GO:0043015">
    <property type="term" value="F:gamma-tubulin binding"/>
    <property type="evidence" value="ECO:0000318"/>
    <property type="project" value="GO_Central"/>
</dbReference>
<dbReference type="GO" id="GO:0051301">
    <property type="term" value="P:cell division"/>
    <property type="evidence" value="ECO:0007669"/>
    <property type="project" value="UniProtKB-KW"/>
</dbReference>
<dbReference type="GO" id="GO:0031122">
    <property type="term" value="P:cytoplasmic microtubule organization"/>
    <property type="evidence" value="ECO:0000315"/>
    <property type="project" value="PomBase"/>
</dbReference>
<dbReference type="GO" id="GO:0051321">
    <property type="term" value="P:meiotic cell cycle"/>
    <property type="evidence" value="ECO:0000318"/>
    <property type="project" value="GO_Central"/>
</dbReference>
<dbReference type="GO" id="GO:0007020">
    <property type="term" value="P:microtubule nucleation"/>
    <property type="evidence" value="ECO:0000305"/>
    <property type="project" value="PomBase"/>
</dbReference>
<dbReference type="GO" id="GO:0000278">
    <property type="term" value="P:mitotic cell cycle"/>
    <property type="evidence" value="ECO:0000318"/>
    <property type="project" value="GO_Central"/>
</dbReference>
<dbReference type="GO" id="GO:0090307">
    <property type="term" value="P:mitotic spindle assembly"/>
    <property type="evidence" value="ECO:0000315"/>
    <property type="project" value="PomBase"/>
</dbReference>
<dbReference type="GO" id="GO:0051225">
    <property type="term" value="P:spindle assembly"/>
    <property type="evidence" value="ECO:0000318"/>
    <property type="project" value="GO_Central"/>
</dbReference>
<dbReference type="Gene3D" id="1.20.120.1900">
    <property type="entry name" value="Gamma-tubulin complex, C-terminal domain"/>
    <property type="match status" value="1"/>
</dbReference>
<dbReference type="InterPro" id="IPR007259">
    <property type="entry name" value="GCP"/>
</dbReference>
<dbReference type="InterPro" id="IPR040457">
    <property type="entry name" value="GCP_C"/>
</dbReference>
<dbReference type="InterPro" id="IPR042241">
    <property type="entry name" value="GCP_C_sf"/>
</dbReference>
<dbReference type="InterPro" id="IPR041470">
    <property type="entry name" value="GCP_N"/>
</dbReference>
<dbReference type="PANTHER" id="PTHR19302">
    <property type="entry name" value="GAMMA TUBULIN COMPLEX PROTEIN"/>
    <property type="match status" value="1"/>
</dbReference>
<dbReference type="PANTHER" id="PTHR19302:SF14">
    <property type="entry name" value="GAMMA-TUBULIN COMPLEX COMPONENT 3"/>
    <property type="match status" value="1"/>
</dbReference>
<dbReference type="Pfam" id="PF04130">
    <property type="entry name" value="GCP_C_terminal"/>
    <property type="match status" value="1"/>
</dbReference>
<dbReference type="Pfam" id="PF17681">
    <property type="entry name" value="GCP_N_terminal"/>
    <property type="match status" value="1"/>
</dbReference>
<feature type="chain" id="PRO_0000078133" description="Spindle pole body component alp6">
    <location>
        <begin position="1"/>
        <end position="832"/>
    </location>
</feature>
<feature type="region of interest" description="Interaction with mzt1">
    <location>
        <begin position="1"/>
        <end position="186"/>
    </location>
</feature>
<feature type="modified residue" description="Phosphothreonine" evidence="2">
    <location>
        <position position="286"/>
    </location>
</feature>
<accession>Q9USQ2</accession>
<accession>O94366</accession>
<accession>Q9P954</accession>